<evidence type="ECO:0000255" key="1">
    <source>
        <dbReference type="HAMAP-Rule" id="MF_00363"/>
    </source>
</evidence>
<proteinExistence type="inferred from homology"/>
<feature type="chain" id="PRO_1000005622" description="UPF0154 protein BCE_3716">
    <location>
        <begin position="1"/>
        <end position="73"/>
    </location>
</feature>
<feature type="transmembrane region" description="Helical" evidence="1">
    <location>
        <begin position="3"/>
        <end position="23"/>
    </location>
</feature>
<organism>
    <name type="scientific">Bacillus cereus (strain ATCC 10987 / NRS 248)</name>
    <dbReference type="NCBI Taxonomy" id="222523"/>
    <lineage>
        <taxon>Bacteria</taxon>
        <taxon>Bacillati</taxon>
        <taxon>Bacillota</taxon>
        <taxon>Bacilli</taxon>
        <taxon>Bacillales</taxon>
        <taxon>Bacillaceae</taxon>
        <taxon>Bacillus</taxon>
        <taxon>Bacillus cereus group</taxon>
    </lineage>
</organism>
<name>Y3716_BACC1</name>
<keyword id="KW-1003">Cell membrane</keyword>
<keyword id="KW-0472">Membrane</keyword>
<keyword id="KW-0812">Transmembrane</keyword>
<keyword id="KW-1133">Transmembrane helix</keyword>
<gene>
    <name type="ordered locus">BCE_3716</name>
</gene>
<protein>
    <recommendedName>
        <fullName evidence="1">UPF0154 protein BCE_3716</fullName>
    </recommendedName>
</protein>
<accession>Q733E2</accession>
<dbReference type="EMBL" id="AE017194">
    <property type="protein sequence ID" value="AAS42621.1"/>
    <property type="molecule type" value="Genomic_DNA"/>
</dbReference>
<dbReference type="SMR" id="Q733E2"/>
<dbReference type="KEGG" id="bca:BCE_3716"/>
<dbReference type="HOGENOM" id="CLU_180108_0_1_9"/>
<dbReference type="Proteomes" id="UP000002527">
    <property type="component" value="Chromosome"/>
</dbReference>
<dbReference type="GO" id="GO:0005886">
    <property type="term" value="C:plasma membrane"/>
    <property type="evidence" value="ECO:0007669"/>
    <property type="project" value="UniProtKB-SubCell"/>
</dbReference>
<dbReference type="HAMAP" id="MF_00363">
    <property type="entry name" value="UPF0154"/>
    <property type="match status" value="1"/>
</dbReference>
<dbReference type="InterPro" id="IPR005359">
    <property type="entry name" value="UPF0154"/>
</dbReference>
<dbReference type="NCBIfam" id="NF002503">
    <property type="entry name" value="PRK01844.1"/>
    <property type="match status" value="1"/>
</dbReference>
<dbReference type="Pfam" id="PF03672">
    <property type="entry name" value="UPF0154"/>
    <property type="match status" value="1"/>
</dbReference>
<comment type="subcellular location">
    <subcellularLocation>
        <location evidence="1">Cell membrane</location>
        <topology evidence="1">Single-pass membrane protein</topology>
    </subcellularLocation>
</comment>
<comment type="similarity">
    <text evidence="1">Belongs to the UPF0154 family.</text>
</comment>
<reference key="1">
    <citation type="journal article" date="2004" name="Nucleic Acids Res.">
        <title>The genome sequence of Bacillus cereus ATCC 10987 reveals metabolic adaptations and a large plasmid related to Bacillus anthracis pXO1.</title>
        <authorList>
            <person name="Rasko D.A."/>
            <person name="Ravel J."/>
            <person name="Oekstad O.A."/>
            <person name="Helgason E."/>
            <person name="Cer R.Z."/>
            <person name="Jiang L."/>
            <person name="Shores K.A."/>
            <person name="Fouts D.E."/>
            <person name="Tourasse N.J."/>
            <person name="Angiuoli S.V."/>
            <person name="Kolonay J.F."/>
            <person name="Nelson W.C."/>
            <person name="Kolstoe A.-B."/>
            <person name="Fraser C.M."/>
            <person name="Read T.D."/>
        </authorList>
    </citation>
    <scope>NUCLEOTIDE SEQUENCE [LARGE SCALE GENOMIC DNA]</scope>
    <source>
        <strain>ATCC 10987 / NRS 248</strain>
    </source>
</reference>
<sequence length="73" mass="8380">MPIWLGILVGVVALVAGVALGFFIARKYMMNYLQKNPPINEQMLKMMMMQMGQKPSQKKINQMMSAMNKQQMK</sequence>